<gene>
    <name evidence="1" type="primary">hisF</name>
    <name type="ordered locus">CLI_1654</name>
</gene>
<feature type="chain" id="PRO_1000063048" description="Imidazole glycerol phosphate synthase subunit HisF">
    <location>
        <begin position="1"/>
        <end position="253"/>
    </location>
</feature>
<feature type="active site" evidence="1">
    <location>
        <position position="11"/>
    </location>
</feature>
<feature type="active site" evidence="1">
    <location>
        <position position="130"/>
    </location>
</feature>
<reference key="1">
    <citation type="submission" date="2007-06" db="EMBL/GenBank/DDBJ databases">
        <authorList>
            <person name="Brinkac L.M."/>
            <person name="Daugherty S."/>
            <person name="Dodson R.J."/>
            <person name="Madupu R."/>
            <person name="Brown J.L."/>
            <person name="Bruce D."/>
            <person name="Detter C."/>
            <person name="Munk C."/>
            <person name="Smith L.A."/>
            <person name="Smith T.J."/>
            <person name="White O."/>
            <person name="Brettin T.S."/>
        </authorList>
    </citation>
    <scope>NUCLEOTIDE SEQUENCE [LARGE SCALE GENOMIC DNA]</scope>
    <source>
        <strain>Langeland / NCTC 10281 / Type F</strain>
    </source>
</reference>
<organism>
    <name type="scientific">Clostridium botulinum (strain Langeland / NCTC 10281 / Type F)</name>
    <dbReference type="NCBI Taxonomy" id="441772"/>
    <lineage>
        <taxon>Bacteria</taxon>
        <taxon>Bacillati</taxon>
        <taxon>Bacillota</taxon>
        <taxon>Clostridia</taxon>
        <taxon>Eubacteriales</taxon>
        <taxon>Clostridiaceae</taxon>
        <taxon>Clostridium</taxon>
    </lineage>
</organism>
<protein>
    <recommendedName>
        <fullName evidence="1">Imidazole glycerol phosphate synthase subunit HisF</fullName>
        <ecNumber evidence="1">4.3.2.10</ecNumber>
    </recommendedName>
    <alternativeName>
        <fullName evidence="1">IGP synthase cyclase subunit</fullName>
    </alternativeName>
    <alternativeName>
        <fullName evidence="1">IGP synthase subunit HisF</fullName>
    </alternativeName>
    <alternativeName>
        <fullName evidence="1">ImGP synthase subunit HisF</fullName>
        <shortName evidence="1">IGPS subunit HisF</shortName>
    </alternativeName>
</protein>
<sequence length="253" mass="27623">MITKRIIPCLDVDMGRVVKGVNFVNLKDVGDPVEIAEFYNKEGADEIVFLDISATHEGRAIMIDVVRKTAEKLFIPLTVGGGIKNINDFRDILRAGADKISVNSSAIRNPKLIKKAAECFGSQCVVVAIDGKKRKDKDGWNVFINGGRIDTGLDAIEWARKVEKLGAGEILFTSMDADGTKEGYDLELTNEVSEAVNIPVIASGGCGKLKHFGEIFEKSSADAALAASLFHFKELSIKEVKNYLKKEGFSVRL</sequence>
<name>HIS6_CLOBL</name>
<dbReference type="EC" id="4.3.2.10" evidence="1"/>
<dbReference type="EMBL" id="CP000728">
    <property type="protein sequence ID" value="ABS40700.1"/>
    <property type="molecule type" value="Genomic_DNA"/>
</dbReference>
<dbReference type="RefSeq" id="WP_012099676.1">
    <property type="nucleotide sequence ID" value="NC_009699.1"/>
</dbReference>
<dbReference type="SMR" id="A7GDQ7"/>
<dbReference type="KEGG" id="cbf:CLI_1654"/>
<dbReference type="HOGENOM" id="CLU_048577_4_0_9"/>
<dbReference type="UniPathway" id="UPA00031">
    <property type="reaction ID" value="UER00010"/>
</dbReference>
<dbReference type="Proteomes" id="UP000002410">
    <property type="component" value="Chromosome"/>
</dbReference>
<dbReference type="GO" id="GO:0005737">
    <property type="term" value="C:cytoplasm"/>
    <property type="evidence" value="ECO:0007669"/>
    <property type="project" value="UniProtKB-SubCell"/>
</dbReference>
<dbReference type="GO" id="GO:0000107">
    <property type="term" value="F:imidazoleglycerol-phosphate synthase activity"/>
    <property type="evidence" value="ECO:0007669"/>
    <property type="project" value="UniProtKB-UniRule"/>
</dbReference>
<dbReference type="GO" id="GO:0016829">
    <property type="term" value="F:lyase activity"/>
    <property type="evidence" value="ECO:0007669"/>
    <property type="project" value="UniProtKB-KW"/>
</dbReference>
<dbReference type="GO" id="GO:0000105">
    <property type="term" value="P:L-histidine biosynthetic process"/>
    <property type="evidence" value="ECO:0007669"/>
    <property type="project" value="UniProtKB-UniRule"/>
</dbReference>
<dbReference type="CDD" id="cd04731">
    <property type="entry name" value="HisF"/>
    <property type="match status" value="1"/>
</dbReference>
<dbReference type="FunFam" id="3.20.20.70:FF:000006">
    <property type="entry name" value="Imidazole glycerol phosphate synthase subunit HisF"/>
    <property type="match status" value="1"/>
</dbReference>
<dbReference type="Gene3D" id="3.20.20.70">
    <property type="entry name" value="Aldolase class I"/>
    <property type="match status" value="1"/>
</dbReference>
<dbReference type="HAMAP" id="MF_01013">
    <property type="entry name" value="HisF"/>
    <property type="match status" value="1"/>
</dbReference>
<dbReference type="InterPro" id="IPR013785">
    <property type="entry name" value="Aldolase_TIM"/>
</dbReference>
<dbReference type="InterPro" id="IPR006062">
    <property type="entry name" value="His_biosynth"/>
</dbReference>
<dbReference type="InterPro" id="IPR004651">
    <property type="entry name" value="HisF"/>
</dbReference>
<dbReference type="InterPro" id="IPR050064">
    <property type="entry name" value="IGPS_HisA/HisF"/>
</dbReference>
<dbReference type="InterPro" id="IPR011060">
    <property type="entry name" value="RibuloseP-bd_barrel"/>
</dbReference>
<dbReference type="NCBIfam" id="TIGR00735">
    <property type="entry name" value="hisF"/>
    <property type="match status" value="1"/>
</dbReference>
<dbReference type="PANTHER" id="PTHR21235:SF2">
    <property type="entry name" value="IMIDAZOLE GLYCEROL PHOSPHATE SYNTHASE HISHF"/>
    <property type="match status" value="1"/>
</dbReference>
<dbReference type="PANTHER" id="PTHR21235">
    <property type="entry name" value="IMIDAZOLE GLYCEROL PHOSPHATE SYNTHASE SUBUNIT HISF/H IGP SYNTHASE SUBUNIT HISF/H"/>
    <property type="match status" value="1"/>
</dbReference>
<dbReference type="Pfam" id="PF00977">
    <property type="entry name" value="His_biosynth"/>
    <property type="match status" value="1"/>
</dbReference>
<dbReference type="SUPFAM" id="SSF51366">
    <property type="entry name" value="Ribulose-phoshate binding barrel"/>
    <property type="match status" value="1"/>
</dbReference>
<evidence type="ECO:0000255" key="1">
    <source>
        <dbReference type="HAMAP-Rule" id="MF_01013"/>
    </source>
</evidence>
<keyword id="KW-0028">Amino-acid biosynthesis</keyword>
<keyword id="KW-0963">Cytoplasm</keyword>
<keyword id="KW-0368">Histidine biosynthesis</keyword>
<keyword id="KW-0456">Lyase</keyword>
<comment type="function">
    <text evidence="1">IGPS catalyzes the conversion of PRFAR and glutamine to IGP, AICAR and glutamate. The HisF subunit catalyzes the cyclization activity that produces IGP and AICAR from PRFAR using the ammonia provided by the HisH subunit.</text>
</comment>
<comment type="catalytic activity">
    <reaction evidence="1">
        <text>5-[(5-phospho-1-deoxy-D-ribulos-1-ylimino)methylamino]-1-(5-phospho-beta-D-ribosyl)imidazole-4-carboxamide + L-glutamine = D-erythro-1-(imidazol-4-yl)glycerol 3-phosphate + 5-amino-1-(5-phospho-beta-D-ribosyl)imidazole-4-carboxamide + L-glutamate + H(+)</text>
        <dbReference type="Rhea" id="RHEA:24793"/>
        <dbReference type="ChEBI" id="CHEBI:15378"/>
        <dbReference type="ChEBI" id="CHEBI:29985"/>
        <dbReference type="ChEBI" id="CHEBI:58278"/>
        <dbReference type="ChEBI" id="CHEBI:58359"/>
        <dbReference type="ChEBI" id="CHEBI:58475"/>
        <dbReference type="ChEBI" id="CHEBI:58525"/>
        <dbReference type="EC" id="4.3.2.10"/>
    </reaction>
</comment>
<comment type="pathway">
    <text evidence="1">Amino-acid biosynthesis; L-histidine biosynthesis; L-histidine from 5-phospho-alpha-D-ribose 1-diphosphate: step 5/9.</text>
</comment>
<comment type="subunit">
    <text evidence="1">Heterodimer of HisH and HisF.</text>
</comment>
<comment type="subcellular location">
    <subcellularLocation>
        <location evidence="1">Cytoplasm</location>
    </subcellularLocation>
</comment>
<comment type="similarity">
    <text evidence="1">Belongs to the HisA/HisF family.</text>
</comment>
<accession>A7GDQ7</accession>
<proteinExistence type="inferred from homology"/>